<organism>
    <name type="scientific">Desmonostoc muscorum</name>
    <name type="common">Nostoc muscorum</name>
    <dbReference type="NCBI Taxonomy" id="1179"/>
    <lineage>
        <taxon>Bacteria</taxon>
        <taxon>Bacillati</taxon>
        <taxon>Cyanobacteriota</taxon>
        <taxon>Cyanophyceae</taxon>
        <taxon>Nostocales</taxon>
        <taxon>Nostocaceae</taxon>
        <taxon>Desmonostoc</taxon>
    </lineage>
</organism>
<sequence>MATFKVTLINEAEGTKHEIEVPDDEYILDAAEEEGYDLPFSCRAGACSTCAGKLVSGTVDQSDQSFLDDDQIEAGYVLTCVAYPTSDVVIQTHKEEDLY</sequence>
<proteinExistence type="evidence at protein level"/>
<reference key="1">
    <citation type="journal article" date="1976" name="J. Biochem.">
        <title>Amino acid sequence of the major component of Nostoc muscorum ferredoxin.</title>
        <authorList>
            <person name="Hase T."/>
            <person name="Wada K."/>
            <person name="Ohmiya M."/>
            <person name="Matsubara H."/>
        </authorList>
    </citation>
    <scope>PROTEIN SEQUENCE OF 2-99</scope>
</reference>
<keyword id="KW-0001">2Fe-2S</keyword>
<keyword id="KW-0903">Direct protein sequencing</keyword>
<keyword id="KW-0249">Electron transport</keyword>
<keyword id="KW-0408">Iron</keyword>
<keyword id="KW-0411">Iron-sulfur</keyword>
<keyword id="KW-0479">Metal-binding</keyword>
<keyword id="KW-0813">Transport</keyword>
<feature type="initiator methionine" description="Removed" evidence="2">
    <location>
        <position position="1"/>
    </location>
</feature>
<feature type="chain" id="PRO_0000189342" description="Ferredoxin">
    <location>
        <begin position="2"/>
        <end position="99"/>
    </location>
</feature>
<feature type="domain" description="2Fe-2S ferredoxin-type" evidence="1">
    <location>
        <begin position="4"/>
        <end position="96"/>
    </location>
</feature>
<feature type="binding site" evidence="1">
    <location>
        <position position="42"/>
    </location>
    <ligand>
        <name>[2Fe-2S] cluster</name>
        <dbReference type="ChEBI" id="CHEBI:190135"/>
    </ligand>
</feature>
<feature type="binding site" evidence="1">
    <location>
        <position position="47"/>
    </location>
    <ligand>
        <name>[2Fe-2S] cluster</name>
        <dbReference type="ChEBI" id="CHEBI:190135"/>
    </ligand>
</feature>
<feature type="binding site" evidence="1">
    <location>
        <position position="50"/>
    </location>
    <ligand>
        <name>[2Fe-2S] cluster</name>
        <dbReference type="ChEBI" id="CHEBI:190135"/>
    </ligand>
</feature>
<feature type="binding site" evidence="1">
    <location>
        <position position="80"/>
    </location>
    <ligand>
        <name>[2Fe-2S] cluster</name>
        <dbReference type="ChEBI" id="CHEBI:190135"/>
    </ligand>
</feature>
<dbReference type="PIR" id="A00257">
    <property type="entry name" value="FENM"/>
</dbReference>
<dbReference type="BMRB" id="P00253"/>
<dbReference type="SMR" id="P00253"/>
<dbReference type="GO" id="GO:0051537">
    <property type="term" value="F:2 iron, 2 sulfur cluster binding"/>
    <property type="evidence" value="ECO:0007669"/>
    <property type="project" value="UniProtKB-KW"/>
</dbReference>
<dbReference type="GO" id="GO:0009055">
    <property type="term" value="F:electron transfer activity"/>
    <property type="evidence" value="ECO:0007669"/>
    <property type="project" value="InterPro"/>
</dbReference>
<dbReference type="GO" id="GO:0046872">
    <property type="term" value="F:metal ion binding"/>
    <property type="evidence" value="ECO:0007669"/>
    <property type="project" value="UniProtKB-KW"/>
</dbReference>
<dbReference type="GO" id="GO:0022900">
    <property type="term" value="P:electron transport chain"/>
    <property type="evidence" value="ECO:0007669"/>
    <property type="project" value="InterPro"/>
</dbReference>
<dbReference type="CDD" id="cd00207">
    <property type="entry name" value="fer2"/>
    <property type="match status" value="1"/>
</dbReference>
<dbReference type="FunFam" id="3.10.20.30:FF:000014">
    <property type="entry name" value="Ferredoxin"/>
    <property type="match status" value="1"/>
</dbReference>
<dbReference type="Gene3D" id="3.10.20.30">
    <property type="match status" value="1"/>
</dbReference>
<dbReference type="InterPro" id="IPR036010">
    <property type="entry name" value="2Fe-2S_ferredoxin-like_sf"/>
</dbReference>
<dbReference type="InterPro" id="IPR001041">
    <property type="entry name" value="2Fe-2S_ferredoxin-type"/>
</dbReference>
<dbReference type="InterPro" id="IPR006058">
    <property type="entry name" value="2Fe2S_fd_BS"/>
</dbReference>
<dbReference type="InterPro" id="IPR012675">
    <property type="entry name" value="Beta-grasp_dom_sf"/>
</dbReference>
<dbReference type="InterPro" id="IPR010241">
    <property type="entry name" value="Fd_pln"/>
</dbReference>
<dbReference type="NCBIfam" id="TIGR02008">
    <property type="entry name" value="fdx_plant"/>
    <property type="match status" value="1"/>
</dbReference>
<dbReference type="PANTHER" id="PTHR43112">
    <property type="entry name" value="FERREDOXIN"/>
    <property type="match status" value="1"/>
</dbReference>
<dbReference type="PANTHER" id="PTHR43112:SF3">
    <property type="entry name" value="FERREDOXIN-2, CHLOROPLASTIC"/>
    <property type="match status" value="1"/>
</dbReference>
<dbReference type="Pfam" id="PF00111">
    <property type="entry name" value="Fer2"/>
    <property type="match status" value="1"/>
</dbReference>
<dbReference type="SUPFAM" id="SSF54292">
    <property type="entry name" value="2Fe-2S ferredoxin-like"/>
    <property type="match status" value="1"/>
</dbReference>
<dbReference type="PROSITE" id="PS00197">
    <property type="entry name" value="2FE2S_FER_1"/>
    <property type="match status" value="1"/>
</dbReference>
<dbReference type="PROSITE" id="PS51085">
    <property type="entry name" value="2FE2S_FER_2"/>
    <property type="match status" value="1"/>
</dbReference>
<name>FER_DESMC</name>
<evidence type="ECO:0000255" key="1">
    <source>
        <dbReference type="PROSITE-ProRule" id="PRU00465"/>
    </source>
</evidence>
<evidence type="ECO:0000269" key="2">
    <source>
    </source>
</evidence>
<evidence type="ECO:0000305" key="3"/>
<comment type="function">
    <text>Ferredoxins are iron-sulfur proteins that transfer electrons in a wide variety of metabolic reactions.</text>
</comment>
<comment type="cofactor">
    <cofactor>
        <name>[2Fe-2S] cluster</name>
        <dbReference type="ChEBI" id="CHEBI:190135"/>
    </cofactor>
    <text>Binds 1 [2Fe-2S] cluster.</text>
</comment>
<comment type="similarity">
    <text evidence="3">Belongs to the 2Fe2S plant-type ferredoxin family.</text>
</comment>
<accession>P00253</accession>
<protein>
    <recommendedName>
        <fullName>Ferredoxin</fullName>
    </recommendedName>
</protein>